<feature type="chain" id="PRO_0000097762" description="Protein SinI">
    <location>
        <begin position="1"/>
        <end position="58"/>
    </location>
</feature>
<feature type="domain" description="Sin" evidence="2">
    <location>
        <begin position="2"/>
        <end position="40"/>
    </location>
</feature>
<dbReference type="EMBL" id="M60287">
    <property type="protein sequence ID" value="AAA22438.1"/>
    <property type="molecule type" value="Genomic_DNA"/>
</dbReference>
<dbReference type="PIR" id="A45824">
    <property type="entry name" value="A45824"/>
</dbReference>
<dbReference type="SMR" id="P22755"/>
<dbReference type="GO" id="GO:0046983">
    <property type="term" value="F:protein dimerization activity"/>
    <property type="evidence" value="ECO:0007669"/>
    <property type="project" value="InterPro"/>
</dbReference>
<dbReference type="GO" id="GO:0006355">
    <property type="term" value="P:regulation of DNA-templated transcription"/>
    <property type="evidence" value="ECO:0007669"/>
    <property type="project" value="InterPro"/>
</dbReference>
<dbReference type="InterPro" id="IPR010981">
    <property type="entry name" value="SinR/SinI_dimer_dom"/>
</dbReference>
<dbReference type="InterPro" id="IPR036281">
    <property type="entry name" value="SinR/SinI_dimer_dom_sf"/>
</dbReference>
<dbReference type="NCBIfam" id="NF046031">
    <property type="entry name" value="AntRepSinIBacil"/>
    <property type="match status" value="1"/>
</dbReference>
<dbReference type="Pfam" id="PF08671">
    <property type="entry name" value="SinI"/>
    <property type="match status" value="1"/>
</dbReference>
<dbReference type="SUPFAM" id="SSF47406">
    <property type="entry name" value="SinR repressor dimerisation domain-like"/>
    <property type="match status" value="1"/>
</dbReference>
<dbReference type="PROSITE" id="PS51500">
    <property type="entry name" value="SIN"/>
    <property type="match status" value="1"/>
</dbReference>
<evidence type="ECO:0000250" key="1"/>
<evidence type="ECO:0000255" key="2">
    <source>
        <dbReference type="PROSITE-ProRule" id="PRU00833"/>
    </source>
</evidence>
<reference key="1">
    <citation type="journal article" date="1990" name="J. Gen. Microbiol.">
        <title>Nucleotide sequences of the Bacillus subtilis flaD locus and a B. licheniformis homologue affecting the autolysin level and flagellation.</title>
        <authorList>
            <person name="Sekiguchi J."/>
            <person name="Ohsu H."/>
            <person name="Kuroda A."/>
            <person name="Moriyama H."/>
            <person name="Akamatsu T."/>
        </authorList>
    </citation>
    <scope>NUCLEOTIDE SEQUENCE [GENOMIC DNA]</scope>
    <source>
        <strain>FD0120</strain>
    </source>
</reference>
<gene>
    <name type="primary">sinI</name>
</gene>
<proteinExistence type="inferred from homology"/>
<organism>
    <name type="scientific">Bacillus licheniformis</name>
    <dbReference type="NCBI Taxonomy" id="1402"/>
    <lineage>
        <taxon>Bacteria</taxon>
        <taxon>Bacillati</taxon>
        <taxon>Bacillota</taxon>
        <taxon>Bacilli</taxon>
        <taxon>Bacillales</taxon>
        <taxon>Bacillaceae</taxon>
        <taxon>Bacillus</taxon>
    </lineage>
</organism>
<sequence length="58" mass="6694">MNKDKNEKEELDEEWTELIKHALEQGISPDDIRIFLNLGKKSSKPSASIERSHSINPF</sequence>
<protein>
    <recommendedName>
        <fullName>Protein SinI</fullName>
    </recommendedName>
</protein>
<accession>P22755</accession>
<name>SINI_BACLI</name>
<comment type="function">
    <text evidence="1">Acts as an antagonist to SinR. SinI prevents SinR from binding to its target sequence on the gene for AprE (By similarity).</text>
</comment>
<comment type="subunit">
    <text evidence="1">Heterodimer with SinR.</text>
</comment>